<sequence>MFGLIGKKVGMTQVFQSNGIVVPVTVIEFEPNYVIGKKTMERDGYDALIMGSVDLKGSKVSRPIKGQYKKLENIEPKRYVIEFKGLKGYDAGDEVGLDAFREIKYVDITGTTKGKGFQGAMKRHNFSGGPSSHGSKFHRHLGGTGQATTPARTFKGTKMAGRMGGEQQTIQNLEIVFIDEEKRAILVKGAVPGVKGSFVIVKKAKKVGI</sequence>
<gene>
    <name evidence="1" type="primary">rplC</name>
    <name type="ordered locus">BDU_481</name>
</gene>
<reference key="1">
    <citation type="journal article" date="2008" name="PLoS Genet.">
        <title>The genome of Borrelia recurrentis, the agent of deadly louse-borne relapsing fever, is a degraded subset of tick-borne Borrelia duttonii.</title>
        <authorList>
            <person name="Lescot M."/>
            <person name="Audic S."/>
            <person name="Robert C."/>
            <person name="Nguyen T.T."/>
            <person name="Blanc G."/>
            <person name="Cutler S.J."/>
            <person name="Wincker P."/>
            <person name="Couloux A."/>
            <person name="Claverie J.-M."/>
            <person name="Raoult D."/>
            <person name="Drancourt M."/>
        </authorList>
    </citation>
    <scope>NUCLEOTIDE SEQUENCE [LARGE SCALE GENOMIC DNA]</scope>
    <source>
        <strain>Ly</strain>
    </source>
</reference>
<accession>B5RM36</accession>
<protein>
    <recommendedName>
        <fullName evidence="1">Large ribosomal subunit protein uL3</fullName>
    </recommendedName>
    <alternativeName>
        <fullName evidence="3">50S ribosomal protein L3</fullName>
    </alternativeName>
</protein>
<organism>
    <name type="scientific">Borrelia duttonii (strain Ly)</name>
    <dbReference type="NCBI Taxonomy" id="412419"/>
    <lineage>
        <taxon>Bacteria</taxon>
        <taxon>Pseudomonadati</taxon>
        <taxon>Spirochaetota</taxon>
        <taxon>Spirochaetia</taxon>
        <taxon>Spirochaetales</taxon>
        <taxon>Borreliaceae</taxon>
        <taxon>Borrelia</taxon>
    </lineage>
</organism>
<evidence type="ECO:0000255" key="1">
    <source>
        <dbReference type="HAMAP-Rule" id="MF_01325"/>
    </source>
</evidence>
<evidence type="ECO:0000256" key="2">
    <source>
        <dbReference type="SAM" id="MobiDB-lite"/>
    </source>
</evidence>
<evidence type="ECO:0000305" key="3"/>
<comment type="function">
    <text evidence="1">One of the primary rRNA binding proteins, it binds directly near the 3'-end of the 23S rRNA, where it nucleates assembly of the 50S subunit.</text>
</comment>
<comment type="subunit">
    <text evidence="1">Part of the 50S ribosomal subunit. Forms a cluster with proteins L14 and L19.</text>
</comment>
<comment type="similarity">
    <text evidence="1">Belongs to the universal ribosomal protein uL3 family.</text>
</comment>
<proteinExistence type="inferred from homology"/>
<feature type="chain" id="PRO_1000141830" description="Large ribosomal subunit protein uL3">
    <location>
        <begin position="1"/>
        <end position="209"/>
    </location>
</feature>
<feature type="region of interest" description="Disordered" evidence="2">
    <location>
        <begin position="127"/>
        <end position="151"/>
    </location>
</feature>
<dbReference type="EMBL" id="CP000976">
    <property type="protein sequence ID" value="ACH93422.1"/>
    <property type="molecule type" value="Genomic_DNA"/>
</dbReference>
<dbReference type="RefSeq" id="WP_012538232.1">
    <property type="nucleotide sequence ID" value="NC_011229.1"/>
</dbReference>
<dbReference type="SMR" id="B5RM36"/>
<dbReference type="STRING" id="412419.BDU_481"/>
<dbReference type="KEGG" id="bdu:BDU_481"/>
<dbReference type="eggNOG" id="COG0087">
    <property type="taxonomic scope" value="Bacteria"/>
</dbReference>
<dbReference type="HOGENOM" id="CLU_044142_4_1_12"/>
<dbReference type="OrthoDB" id="9806135at2"/>
<dbReference type="Proteomes" id="UP000000611">
    <property type="component" value="Chromosome"/>
</dbReference>
<dbReference type="GO" id="GO:0022625">
    <property type="term" value="C:cytosolic large ribosomal subunit"/>
    <property type="evidence" value="ECO:0007669"/>
    <property type="project" value="TreeGrafter"/>
</dbReference>
<dbReference type="GO" id="GO:0019843">
    <property type="term" value="F:rRNA binding"/>
    <property type="evidence" value="ECO:0007669"/>
    <property type="project" value="UniProtKB-UniRule"/>
</dbReference>
<dbReference type="GO" id="GO:0003735">
    <property type="term" value="F:structural constituent of ribosome"/>
    <property type="evidence" value="ECO:0007669"/>
    <property type="project" value="InterPro"/>
</dbReference>
<dbReference type="GO" id="GO:0006412">
    <property type="term" value="P:translation"/>
    <property type="evidence" value="ECO:0007669"/>
    <property type="project" value="UniProtKB-UniRule"/>
</dbReference>
<dbReference type="FunFam" id="2.40.30.10:FF:000004">
    <property type="entry name" value="50S ribosomal protein L3"/>
    <property type="match status" value="1"/>
</dbReference>
<dbReference type="Gene3D" id="3.30.160.810">
    <property type="match status" value="1"/>
</dbReference>
<dbReference type="Gene3D" id="2.40.30.10">
    <property type="entry name" value="Translation factors"/>
    <property type="match status" value="1"/>
</dbReference>
<dbReference type="HAMAP" id="MF_01325_B">
    <property type="entry name" value="Ribosomal_uL3_B"/>
    <property type="match status" value="1"/>
</dbReference>
<dbReference type="InterPro" id="IPR000597">
    <property type="entry name" value="Ribosomal_uL3"/>
</dbReference>
<dbReference type="InterPro" id="IPR019927">
    <property type="entry name" value="Ribosomal_uL3_bac/org-type"/>
</dbReference>
<dbReference type="InterPro" id="IPR019926">
    <property type="entry name" value="Ribosomal_uL3_CS"/>
</dbReference>
<dbReference type="InterPro" id="IPR009000">
    <property type="entry name" value="Transl_B-barrel_sf"/>
</dbReference>
<dbReference type="NCBIfam" id="TIGR03625">
    <property type="entry name" value="L3_bact"/>
    <property type="match status" value="1"/>
</dbReference>
<dbReference type="PANTHER" id="PTHR11229">
    <property type="entry name" value="50S RIBOSOMAL PROTEIN L3"/>
    <property type="match status" value="1"/>
</dbReference>
<dbReference type="PANTHER" id="PTHR11229:SF16">
    <property type="entry name" value="LARGE RIBOSOMAL SUBUNIT PROTEIN UL3C"/>
    <property type="match status" value="1"/>
</dbReference>
<dbReference type="Pfam" id="PF00297">
    <property type="entry name" value="Ribosomal_L3"/>
    <property type="match status" value="1"/>
</dbReference>
<dbReference type="SUPFAM" id="SSF50447">
    <property type="entry name" value="Translation proteins"/>
    <property type="match status" value="1"/>
</dbReference>
<dbReference type="PROSITE" id="PS00474">
    <property type="entry name" value="RIBOSOMAL_L3"/>
    <property type="match status" value="1"/>
</dbReference>
<keyword id="KW-0687">Ribonucleoprotein</keyword>
<keyword id="KW-0689">Ribosomal protein</keyword>
<keyword id="KW-0694">RNA-binding</keyword>
<keyword id="KW-0699">rRNA-binding</keyword>
<name>RL3_BORDL</name>